<keyword id="KW-0460">Magnesium</keyword>
<keyword id="KW-0479">Metal-binding</keyword>
<keyword id="KW-1185">Reference proteome</keyword>
<keyword id="KW-0808">Transferase</keyword>
<dbReference type="EC" id="2.5.1.-" evidence="1"/>
<dbReference type="EMBL" id="AP008226">
    <property type="protein sequence ID" value="BAD71738.1"/>
    <property type="molecule type" value="Genomic_DNA"/>
</dbReference>
<dbReference type="RefSeq" id="WP_011229011.1">
    <property type="nucleotide sequence ID" value="NC_006461.1"/>
</dbReference>
<dbReference type="RefSeq" id="YP_145181.1">
    <property type="nucleotide sequence ID" value="NC_006461.1"/>
</dbReference>
<dbReference type="SMR" id="Q5SH15"/>
<dbReference type="EnsemblBacteria" id="BAD71738">
    <property type="protein sequence ID" value="BAD71738"/>
    <property type="gene ID" value="BAD71738"/>
</dbReference>
<dbReference type="GeneID" id="3170150"/>
<dbReference type="KEGG" id="ttj:TTHA1915"/>
<dbReference type="PATRIC" id="fig|300852.9.peg.1883"/>
<dbReference type="eggNOG" id="COG0020">
    <property type="taxonomic scope" value="Bacteria"/>
</dbReference>
<dbReference type="HOGENOM" id="CLU_038505_2_0_0"/>
<dbReference type="PhylomeDB" id="Q5SH15"/>
<dbReference type="Proteomes" id="UP000000532">
    <property type="component" value="Chromosome"/>
</dbReference>
<dbReference type="GO" id="GO:0045547">
    <property type="term" value="F:ditrans,polycis-polyprenyl diphosphate synthase [(2E,6E)-farnesyl diphosphate specific] activity"/>
    <property type="evidence" value="ECO:0007669"/>
    <property type="project" value="TreeGrafter"/>
</dbReference>
<dbReference type="GO" id="GO:0000287">
    <property type="term" value="F:magnesium ion binding"/>
    <property type="evidence" value="ECO:0007669"/>
    <property type="project" value="UniProtKB-UniRule"/>
</dbReference>
<dbReference type="GO" id="GO:0016094">
    <property type="term" value="P:polyprenol biosynthetic process"/>
    <property type="evidence" value="ECO:0007669"/>
    <property type="project" value="TreeGrafter"/>
</dbReference>
<dbReference type="CDD" id="cd00475">
    <property type="entry name" value="Cis_IPPS"/>
    <property type="match status" value="1"/>
</dbReference>
<dbReference type="FunFam" id="3.40.1180.10:FF:000003">
    <property type="entry name" value="Isoprenyl transferase 2"/>
    <property type="match status" value="1"/>
</dbReference>
<dbReference type="Gene3D" id="3.40.1180.10">
    <property type="entry name" value="Decaprenyl diphosphate synthase-like"/>
    <property type="match status" value="1"/>
</dbReference>
<dbReference type="HAMAP" id="MF_01139">
    <property type="entry name" value="ISPT"/>
    <property type="match status" value="1"/>
</dbReference>
<dbReference type="InterPro" id="IPR001441">
    <property type="entry name" value="UPP_synth-like"/>
</dbReference>
<dbReference type="InterPro" id="IPR018520">
    <property type="entry name" value="UPP_synth-like_CS"/>
</dbReference>
<dbReference type="InterPro" id="IPR036424">
    <property type="entry name" value="UPP_synth-like_sf"/>
</dbReference>
<dbReference type="NCBIfam" id="NF011409">
    <property type="entry name" value="PRK14835.1"/>
    <property type="match status" value="1"/>
</dbReference>
<dbReference type="NCBIfam" id="TIGR00055">
    <property type="entry name" value="uppS"/>
    <property type="match status" value="1"/>
</dbReference>
<dbReference type="PANTHER" id="PTHR10291:SF43">
    <property type="entry name" value="DEHYDRODOLICHYL DIPHOSPHATE SYNTHASE COMPLEX SUBUNIT DHDDS"/>
    <property type="match status" value="1"/>
</dbReference>
<dbReference type="PANTHER" id="PTHR10291">
    <property type="entry name" value="DEHYDRODOLICHYL DIPHOSPHATE SYNTHASE FAMILY MEMBER"/>
    <property type="match status" value="1"/>
</dbReference>
<dbReference type="Pfam" id="PF01255">
    <property type="entry name" value="Prenyltransf"/>
    <property type="match status" value="1"/>
</dbReference>
<dbReference type="SUPFAM" id="SSF64005">
    <property type="entry name" value="Undecaprenyl diphosphate synthase"/>
    <property type="match status" value="1"/>
</dbReference>
<dbReference type="PROSITE" id="PS01066">
    <property type="entry name" value="UPP_SYNTHASE"/>
    <property type="match status" value="1"/>
</dbReference>
<feature type="chain" id="PRO_0000123703" description="Isoprenyl transferase">
    <location>
        <begin position="1"/>
        <end position="263"/>
    </location>
</feature>
<feature type="active site" evidence="1">
    <location>
        <position position="38"/>
    </location>
</feature>
<feature type="active site" description="Proton acceptor" evidence="1">
    <location>
        <position position="86"/>
    </location>
</feature>
<feature type="binding site" evidence="1">
    <location>
        <position position="38"/>
    </location>
    <ligand>
        <name>Mg(2+)</name>
        <dbReference type="ChEBI" id="CHEBI:18420"/>
    </ligand>
</feature>
<feature type="binding site" evidence="1">
    <location>
        <begin position="39"/>
        <end position="42"/>
    </location>
    <ligand>
        <name>substrate</name>
    </ligand>
</feature>
<feature type="binding site" evidence="1">
    <location>
        <position position="55"/>
    </location>
    <ligand>
        <name>substrate</name>
    </ligand>
</feature>
<feature type="binding site" evidence="1">
    <location>
        <begin position="83"/>
        <end position="85"/>
    </location>
    <ligand>
        <name>substrate</name>
    </ligand>
</feature>
<feature type="binding site" evidence="1">
    <location>
        <position position="87"/>
    </location>
    <ligand>
        <name>substrate</name>
    </ligand>
</feature>
<feature type="binding site" evidence="1">
    <location>
        <position position="89"/>
    </location>
    <ligand>
        <name>substrate</name>
    </ligand>
</feature>
<feature type="binding site" evidence="1">
    <location>
        <position position="212"/>
    </location>
    <ligand>
        <name>substrate</name>
    </ligand>
</feature>
<feature type="binding site" evidence="1">
    <location>
        <begin position="218"/>
        <end position="220"/>
    </location>
    <ligand>
        <name>substrate</name>
    </ligand>
</feature>
<feature type="binding site" evidence="1">
    <location>
        <position position="231"/>
    </location>
    <ligand>
        <name>Mg(2+)</name>
        <dbReference type="ChEBI" id="CHEBI:18420"/>
    </ligand>
</feature>
<organism>
    <name type="scientific">Thermus thermophilus (strain ATCC 27634 / DSM 579 / HB8)</name>
    <dbReference type="NCBI Taxonomy" id="300852"/>
    <lineage>
        <taxon>Bacteria</taxon>
        <taxon>Thermotogati</taxon>
        <taxon>Deinococcota</taxon>
        <taxon>Deinococci</taxon>
        <taxon>Thermales</taxon>
        <taxon>Thermaceae</taxon>
        <taxon>Thermus</taxon>
    </lineage>
</organism>
<accession>Q5SH15</accession>
<proteinExistence type="inferred from homology"/>
<comment type="function">
    <text evidence="1">Catalyzes the condensation of isopentenyl diphosphate (IPP) with allylic pyrophosphates generating different type of terpenoids.</text>
</comment>
<comment type="cofactor">
    <cofactor evidence="1">
        <name>Mg(2+)</name>
        <dbReference type="ChEBI" id="CHEBI:18420"/>
    </cofactor>
    <text evidence="1">Binds 2 magnesium ions per subunit.</text>
</comment>
<comment type="subunit">
    <text evidence="1">Homodimer.</text>
</comment>
<comment type="similarity">
    <text evidence="1">Belongs to the UPP synthase family.</text>
</comment>
<sequence length="263" mass="30893">MVRRLLALSRPLYWLYEKRLLREVKRGPMPRHLGLILDGNRRYARALGLSPTKGHEFGVQKAYEVLEWCLEMGIKTVTVWVFSTDNFKRPPEEVETLMNLFLREAERMAEDHRILEHQVRVRFIGRREGFSPEVVRAIERLERRTEGHRGMFLNIAMGYGGREEIVDAVKRLLLEAEARGLSPKEVAEGLTPEDIARHLYTAGLPDPDFIIRTSGEIRLSGFLLWQSAYSEFYFADVLWPEFRKIDFLRALRSYQARERRFGR</sequence>
<evidence type="ECO:0000255" key="1">
    <source>
        <dbReference type="HAMAP-Rule" id="MF_01139"/>
    </source>
</evidence>
<protein>
    <recommendedName>
        <fullName evidence="1">Isoprenyl transferase</fullName>
        <ecNumber evidence="1">2.5.1.-</ecNumber>
    </recommendedName>
</protein>
<name>ISPT_THET8</name>
<reference key="1">
    <citation type="submission" date="2004-11" db="EMBL/GenBank/DDBJ databases">
        <title>Complete genome sequence of Thermus thermophilus HB8.</title>
        <authorList>
            <person name="Masui R."/>
            <person name="Kurokawa K."/>
            <person name="Nakagawa N."/>
            <person name="Tokunaga F."/>
            <person name="Koyama Y."/>
            <person name="Shibata T."/>
            <person name="Oshima T."/>
            <person name="Yokoyama S."/>
            <person name="Yasunaga T."/>
            <person name="Kuramitsu S."/>
        </authorList>
    </citation>
    <scope>NUCLEOTIDE SEQUENCE [LARGE SCALE GENOMIC DNA]</scope>
    <source>
        <strain>ATCC 27634 / DSM 579 / HB8</strain>
    </source>
</reference>
<gene>
    <name evidence="1" type="primary">uppS</name>
    <name type="ordered locus">TTHA1915</name>
</gene>